<evidence type="ECO:0000250" key="1">
    <source>
        <dbReference type="UniProtKB" id="Q6P3D0"/>
    </source>
</evidence>
<evidence type="ECO:0000250" key="2">
    <source>
        <dbReference type="UniProtKB" id="Q6TEC1"/>
    </source>
</evidence>
<evidence type="ECO:0000255" key="3">
    <source>
        <dbReference type="PROSITE-ProRule" id="PRU00794"/>
    </source>
</evidence>
<evidence type="ECO:0000269" key="4">
    <source>
    </source>
</evidence>
<evidence type="ECO:0000269" key="5">
    <source>
    </source>
</evidence>
<evidence type="ECO:0000269" key="6">
    <source>
    </source>
</evidence>
<evidence type="ECO:0000269" key="7">
    <source>
    </source>
</evidence>
<evidence type="ECO:0000269" key="8">
    <source>
    </source>
</evidence>
<evidence type="ECO:0000269" key="9">
    <source>
    </source>
</evidence>
<evidence type="ECO:0000269" key="10">
    <source>
    </source>
</evidence>
<evidence type="ECO:0000269" key="11">
    <source>
    </source>
</evidence>
<evidence type="ECO:0000303" key="12">
    <source>
    </source>
</evidence>
<evidence type="ECO:0000303" key="13">
    <source>
    </source>
</evidence>
<evidence type="ECO:0000303" key="14">
    <source>
    </source>
</evidence>
<evidence type="ECO:0000305" key="15"/>
<evidence type="ECO:0000305" key="16">
    <source>
    </source>
</evidence>
<evidence type="ECO:0000305" key="17">
    <source>
    </source>
</evidence>
<evidence type="ECO:0007744" key="18">
    <source>
        <dbReference type="PDB" id="6X7U"/>
    </source>
</evidence>
<evidence type="ECO:0007744" key="19">
    <source>
        <dbReference type="PDB" id="6X7V"/>
    </source>
</evidence>
<evidence type="ECO:0007829" key="20">
    <source>
        <dbReference type="PDB" id="2XSQ"/>
    </source>
</evidence>
<evidence type="ECO:0007829" key="21">
    <source>
        <dbReference type="PDB" id="3MGM"/>
    </source>
</evidence>
<evidence type="ECO:0007829" key="22">
    <source>
        <dbReference type="PDB" id="6B09"/>
    </source>
</evidence>
<protein>
    <recommendedName>
        <fullName>U8 snoRNA-decapping enzyme</fullName>
        <ecNumber evidence="4 5 6 8 9">3.6.1.62</ecNumber>
    </recommendedName>
    <alternativeName>
        <fullName>IDP phosphatase</fullName>
        <shortName>IDPase</shortName>
        <ecNumber evidence="7 10">3.6.1.64</ecNumber>
    </alternativeName>
    <alternativeName>
        <fullName>Inosine diphosphate phosphatase</fullName>
    </alternativeName>
    <alternativeName>
        <fullName>Nucleoside diphosphate-linked moiety X motif 16</fullName>
        <shortName>Nudix motif 16</shortName>
    </alternativeName>
    <alternativeName>
        <fullName>Nudix hydrolase 16</fullName>
    </alternativeName>
    <alternativeName>
        <fullName evidence="14">U8 snoRNA-binding protein H29K</fullName>
    </alternativeName>
    <alternativeName>
        <fullName>m7GpppN-mRNA hydrolase</fullName>
    </alternativeName>
</protein>
<organism>
    <name type="scientific">Homo sapiens</name>
    <name type="common">Human</name>
    <dbReference type="NCBI Taxonomy" id="9606"/>
    <lineage>
        <taxon>Eukaryota</taxon>
        <taxon>Metazoa</taxon>
        <taxon>Chordata</taxon>
        <taxon>Craniata</taxon>
        <taxon>Vertebrata</taxon>
        <taxon>Euteleostomi</taxon>
        <taxon>Mammalia</taxon>
        <taxon>Eutheria</taxon>
        <taxon>Euarchontoglires</taxon>
        <taxon>Primates</taxon>
        <taxon>Haplorrhini</taxon>
        <taxon>Catarrhini</taxon>
        <taxon>Hominidae</taxon>
        <taxon>Homo</taxon>
    </lineage>
</organism>
<comment type="function">
    <text evidence="1 4 5 6 7 8 9 10 11">RNA-binding and decapping enzyme that catalyzes the cleavage of the cap structure of snoRNAs and mRNAs in a metal-dependent manner. Part of the U8 snoRNP complex that is required for the accumulation of mature 5.8S and 28S rRNA. Has diphosphatase activity and removes m7G and/or m227G caps from U8 snoRNA and leaves a 5'monophosphate on the RNA. Also catalyzes the cleavage of the cap structure on mRNAs. Does not hydrolyze cap analog structures like 7-methylguanosine nucleoside triphosphate (m7GpppG). Also hydrolysis m7G- and m227G U3-capped RNAs but with less efficiencies. Has broad substrate specificity with manganese or cobalt as cofactor and can act on various RNA species. Binds to the U8 snoRNA; metal is not required for RNA-binding. May play a role in the regulation of snoRNAs and mRNAs degradation. Also acts as a phosphatase; hydrolyzes the non-canonical purine nucleotides inosine diphosphate (IDP) and deoxyinosine diphosphate (dITP) as well as guanosine diphosphate (GDP), deoxyguanosine diphosphate (dGDP), xanthine diphosphate (XDP), inosine triphosphate (ITP) and deoxyinosine triphosphate (ITP) to their respective monophosphate derivatives and does not distinguish between the deoxy- and ribose forms (PubMed:20385596, PubMed:26121039). The order of activity with different substrates is IDP &gt; dIDP &gt;&gt; GDP = dGDP &gt; XDP = ITP = dITP (PubMed:20385596). Binds strongly to GTP, ITP and XTP. Participates in the hydrolysis of dIDP/IDP and probably excludes non-canonical purines from RNA and DNA precursor pools, thus preventing their incorporation into RNA and DNA and avoiding chromosomal lesions (PubMed:20385596). Exhibits decapping activity towards NAD-capped RNAs and FAD-capped RNAs (PubMed:32432673). Exhibits decapping activity towards dpCoA-capped RNAs in vitro (By similarity).</text>
</comment>
<comment type="catalytic activity">
    <reaction evidence="4 5 6 8 9">
        <text>a 5'-end (N(7)-methyl 5'-triphosphoguanosine)-ribonucleoside in mRNA + H2O = N(7)-methyl-GDP + a 5'-end phospho-ribonucleoside in mRNA + 2 H(+)</text>
        <dbReference type="Rhea" id="RHEA:67484"/>
        <dbReference type="Rhea" id="RHEA-COMP:15692"/>
        <dbReference type="Rhea" id="RHEA-COMP:17167"/>
        <dbReference type="ChEBI" id="CHEBI:15377"/>
        <dbReference type="ChEBI" id="CHEBI:15378"/>
        <dbReference type="ChEBI" id="CHEBI:63714"/>
        <dbReference type="ChEBI" id="CHEBI:138282"/>
        <dbReference type="ChEBI" id="CHEBI:156461"/>
        <dbReference type="EC" id="3.6.1.62"/>
    </reaction>
    <physiologicalReaction direction="left-to-right" evidence="4 5 6 8 9">
        <dbReference type="Rhea" id="RHEA:67485"/>
    </physiologicalReaction>
</comment>
<comment type="catalytic activity">
    <reaction evidence="7 10">
        <text>IDP + H2O = IMP + phosphate + H(+)</text>
        <dbReference type="Rhea" id="RHEA:35207"/>
        <dbReference type="ChEBI" id="CHEBI:15377"/>
        <dbReference type="ChEBI" id="CHEBI:15378"/>
        <dbReference type="ChEBI" id="CHEBI:43474"/>
        <dbReference type="ChEBI" id="CHEBI:58053"/>
        <dbReference type="ChEBI" id="CHEBI:58280"/>
        <dbReference type="EC" id="3.6.1.64"/>
    </reaction>
    <physiologicalReaction direction="left-to-right" evidence="7 10">
        <dbReference type="Rhea" id="RHEA:35208"/>
    </physiologicalReaction>
</comment>
<comment type="catalytic activity">
    <reaction evidence="7 10">
        <text>dIDP + H2O = dIMP + phosphate + H(+)</text>
        <dbReference type="Rhea" id="RHEA:35211"/>
        <dbReference type="ChEBI" id="CHEBI:15377"/>
        <dbReference type="ChEBI" id="CHEBI:15378"/>
        <dbReference type="ChEBI" id="CHEBI:43474"/>
        <dbReference type="ChEBI" id="CHEBI:61194"/>
        <dbReference type="ChEBI" id="CHEBI:62286"/>
        <dbReference type="EC" id="3.6.1.64"/>
    </reaction>
    <physiologicalReaction direction="left-to-right" evidence="7 10">
        <dbReference type="Rhea" id="RHEA:35212"/>
    </physiologicalReaction>
</comment>
<comment type="catalytic activity">
    <reaction evidence="11">
        <text>a 5'-end NAD(+)-phospho-ribonucleoside in mRNA + H2O = a 5'-end phospho-adenosine-phospho-ribonucleoside in mRNA + beta-nicotinamide D-ribonucleotide + 2 H(+)</text>
        <dbReference type="Rhea" id="RHEA:60876"/>
        <dbReference type="Rhea" id="RHEA-COMP:15698"/>
        <dbReference type="Rhea" id="RHEA-COMP:15719"/>
        <dbReference type="ChEBI" id="CHEBI:14649"/>
        <dbReference type="ChEBI" id="CHEBI:15377"/>
        <dbReference type="ChEBI" id="CHEBI:15378"/>
        <dbReference type="ChEBI" id="CHEBI:144029"/>
        <dbReference type="ChEBI" id="CHEBI:144051"/>
    </reaction>
    <physiologicalReaction direction="left-to-right" evidence="11">
        <dbReference type="Rhea" id="RHEA:60877"/>
    </physiologicalReaction>
</comment>
<comment type="catalytic activity">
    <reaction evidence="11">
        <text>a 5'-end FAD-phospho-ribonucleoside in mRNA + H2O = a 5'-end phospho-adenosine-phospho-ribonucleoside in mRNA + FMN + 2 H(+)</text>
        <dbReference type="Rhea" id="RHEA:67588"/>
        <dbReference type="Rhea" id="RHEA-COMP:15719"/>
        <dbReference type="Rhea" id="RHEA-COMP:17275"/>
        <dbReference type="ChEBI" id="CHEBI:15377"/>
        <dbReference type="ChEBI" id="CHEBI:15378"/>
        <dbReference type="ChEBI" id="CHEBI:58210"/>
        <dbReference type="ChEBI" id="CHEBI:144051"/>
        <dbReference type="ChEBI" id="CHEBI:172372"/>
    </reaction>
    <physiologicalReaction direction="left-to-right" evidence="17">
        <dbReference type="Rhea" id="RHEA:67589"/>
    </physiologicalReaction>
</comment>
<comment type="catalytic activity">
    <reaction evidence="1">
        <text>a 5'-end CoA-ribonucleoside in mRNA + H2O = a 5'-end phospho-adenosine-phospho-ribonucleoside in mRNA + (R)-4'-phosphopantetheine + 2 H(+)</text>
        <dbReference type="Rhea" id="RHEA:67592"/>
        <dbReference type="Rhea" id="RHEA-COMP:15719"/>
        <dbReference type="Rhea" id="RHEA-COMP:17276"/>
        <dbReference type="ChEBI" id="CHEBI:15377"/>
        <dbReference type="ChEBI" id="CHEBI:15378"/>
        <dbReference type="ChEBI" id="CHEBI:61723"/>
        <dbReference type="ChEBI" id="CHEBI:144051"/>
        <dbReference type="ChEBI" id="CHEBI:172371"/>
    </reaction>
    <physiologicalReaction direction="left-to-right" evidence="1">
        <dbReference type="Rhea" id="RHEA:67593"/>
    </physiologicalReaction>
</comment>
<comment type="cofactor">
    <cofactor evidence="5 9 10">
        <name>Mg(2+)</name>
        <dbReference type="ChEBI" id="CHEBI:18420"/>
    </cofactor>
    <cofactor evidence="5 9 11">
        <name>Mn(2+)</name>
        <dbReference type="ChEBI" id="CHEBI:29035"/>
    </cofactor>
    <cofactor evidence="5 9">
        <name>Co(2+)</name>
        <dbReference type="ChEBI" id="CHEBI:48828"/>
    </cofactor>
    <text evidence="5 9">Binds 3 or 4 divalent metal cations. Acts specifically on U8 snoRNA with magnesium as cofactor. Has broad substrate specificity with bound manganese or cobalt (in vitro).</text>
</comment>
<comment type="activity regulation">
    <text evidence="10">The phosphatase activity is inhibited by the product IMP.</text>
</comment>
<comment type="biophysicochemical properties">
    <kinetics>
        <KM evidence="7">0.062 uM for IDP (at 37 degrees Celsius)</KM>
        <KM evidence="7">0.088 uM for dIDP (at 37 degrees Celsius)</KM>
        <KM evidence="7">0.33 uM for GDP (at 37 degrees Celsius)</KM>
        <KM evidence="7">0.319 mM for dGDP (at 37 degrees Celsius)</KM>
        <KM evidence="7">15.7 mM for XDP (at 37 degrees Celsius)</KM>
        <KM evidence="7">22.1 mM for ITP (at 37 degrees Celsius)</KM>
        <KM evidence="7">24.1 mM for dITP (at 37 degrees Celsius)</KM>
        <text evidence="7">kcat is 0.931 sec(-1) with IDP. kcat is 0.966 sec(-1) with dIDP. kcat is 0.518 sec(-1) with GDP. kcat is 0.492 sec(-1) with dGDP. kcat is 2.6 sec(-1) with XDP. kcat is 3.06 sec(-1) with ITP. kcat is 3.2 sec(-1) with dITP. The catalytic efficiency for IDP is at least 1.3-fold higher than for dIDP, 9.6-fold higher than for GDP and dGDP, 100-fold higher than for XDP, ITP and dITP.</text>
    </kinetics>
    <phDependence>
        <text evidence="7">Gradually increased from pH 6.5 to 8.5 in its IDP hydrolyzing activity.</text>
    </phDependence>
    <temperatureDependence>
        <text evidence="7">Exhibited a temperature-dependent increase in its IDP hydrolyzing activity up to 60 degrees Celsius.</text>
    </temperatureDependence>
</comment>
<comment type="subunit">
    <text evidence="5 6 10 11">Homodimer.</text>
</comment>
<comment type="interaction">
    <interactant intactId="EBI-5464685">
        <id>Q96DE0</id>
    </interactant>
    <interactant intactId="EBI-5464685">
        <id>Q96DE0</id>
        <label>NUDT16</label>
    </interactant>
    <organismsDiffer>false</organismsDiffer>
    <experiments>2</experiments>
</comment>
<comment type="subcellular location">
    <subcellularLocation>
        <location evidence="7 9">Nucleus</location>
    </subcellularLocation>
    <subcellularLocation>
        <location evidence="2">Nucleus</location>
        <location evidence="2">Nucleoplasm</location>
    </subcellularLocation>
    <subcellularLocation>
        <location evidence="2">Nucleus</location>
        <location evidence="2">Nucleolus</location>
    </subcellularLocation>
    <subcellularLocation>
        <location evidence="8 9">Cytoplasm</location>
    </subcellularLocation>
    <text evidence="2 8">Localized predominantly in the cytoplasm (PubMed:21070968). Localized in nucleolus, and in a minor proportion in distinct foci in the nucleoplasm (By similarity).</text>
</comment>
<comment type="alternative products">
    <event type="alternative splicing"/>
    <isoform>
        <id>Q96DE0-1</id>
        <name>1</name>
        <sequence type="displayed"/>
    </isoform>
    <isoform>
        <id>Q96DE0-2</id>
        <name>2</name>
        <sequence type="described" ref="VSP_045450 VSP_045451"/>
    </isoform>
    <isoform>
        <id>Q96DE0-3</id>
        <name>3</name>
        <sequence type="described" ref="VSP_045449 VSP_045452"/>
    </isoform>
    <isoform>
        <id>Q96DE0-4</id>
        <name>4</name>
        <sequence type="described" ref="VSP_045451"/>
    </isoform>
</comment>
<comment type="tissue specificity">
    <text evidence="7">Expressed strongly in lung, kidney, adrenal gland, testis, heart and brain.</text>
</comment>
<comment type="similarity">
    <text evidence="15">Belongs to the Nudix hydrolase family. NUDT16 subfamily.</text>
</comment>
<comment type="sequence caution" evidence="15">
    <conflict type="erroneous initiation">
        <sequence resource="EMBL-CDS" id="BAB71024"/>
    </conflict>
    <text>Truncated N-terminus.</text>
</comment>
<proteinExistence type="evidence at protein level"/>
<reference key="1">
    <citation type="journal article" date="2004" name="Nat. Genet.">
        <title>Complete sequencing and characterization of 21,243 full-length human cDNAs.</title>
        <authorList>
            <person name="Ota T."/>
            <person name="Suzuki Y."/>
            <person name="Nishikawa T."/>
            <person name="Otsuki T."/>
            <person name="Sugiyama T."/>
            <person name="Irie R."/>
            <person name="Wakamatsu A."/>
            <person name="Hayashi K."/>
            <person name="Sato H."/>
            <person name="Nagai K."/>
            <person name="Kimura K."/>
            <person name="Makita H."/>
            <person name="Sekine M."/>
            <person name="Obayashi M."/>
            <person name="Nishi T."/>
            <person name="Shibahara T."/>
            <person name="Tanaka T."/>
            <person name="Ishii S."/>
            <person name="Yamamoto J."/>
            <person name="Saito K."/>
            <person name="Kawai Y."/>
            <person name="Isono Y."/>
            <person name="Nakamura Y."/>
            <person name="Nagahari K."/>
            <person name="Murakami K."/>
            <person name="Yasuda T."/>
            <person name="Iwayanagi T."/>
            <person name="Wagatsuma M."/>
            <person name="Shiratori A."/>
            <person name="Sudo H."/>
            <person name="Hosoiri T."/>
            <person name="Kaku Y."/>
            <person name="Kodaira H."/>
            <person name="Kondo H."/>
            <person name="Sugawara M."/>
            <person name="Takahashi M."/>
            <person name="Kanda K."/>
            <person name="Yokoi T."/>
            <person name="Furuya T."/>
            <person name="Kikkawa E."/>
            <person name="Omura Y."/>
            <person name="Abe K."/>
            <person name="Kamihara K."/>
            <person name="Katsuta N."/>
            <person name="Sato K."/>
            <person name="Tanikawa M."/>
            <person name="Yamazaki M."/>
            <person name="Ninomiya K."/>
            <person name="Ishibashi T."/>
            <person name="Yamashita H."/>
            <person name="Murakawa K."/>
            <person name="Fujimori K."/>
            <person name="Tanai H."/>
            <person name="Kimata M."/>
            <person name="Watanabe M."/>
            <person name="Hiraoka S."/>
            <person name="Chiba Y."/>
            <person name="Ishida S."/>
            <person name="Ono Y."/>
            <person name="Takiguchi S."/>
            <person name="Watanabe S."/>
            <person name="Yosida M."/>
            <person name="Hotuta T."/>
            <person name="Kusano J."/>
            <person name="Kanehori K."/>
            <person name="Takahashi-Fujii A."/>
            <person name="Hara H."/>
            <person name="Tanase T.-O."/>
            <person name="Nomura Y."/>
            <person name="Togiya S."/>
            <person name="Komai F."/>
            <person name="Hara R."/>
            <person name="Takeuchi K."/>
            <person name="Arita M."/>
            <person name="Imose N."/>
            <person name="Musashino K."/>
            <person name="Yuuki H."/>
            <person name="Oshima A."/>
            <person name="Sasaki N."/>
            <person name="Aotsuka S."/>
            <person name="Yoshikawa Y."/>
            <person name="Matsunawa H."/>
            <person name="Ichihara T."/>
            <person name="Shiohata N."/>
            <person name="Sano S."/>
            <person name="Moriya S."/>
            <person name="Momiyama H."/>
            <person name="Satoh N."/>
            <person name="Takami S."/>
            <person name="Terashima Y."/>
            <person name="Suzuki O."/>
            <person name="Nakagawa S."/>
            <person name="Senoh A."/>
            <person name="Mizoguchi H."/>
            <person name="Goto Y."/>
            <person name="Shimizu F."/>
            <person name="Wakebe H."/>
            <person name="Hishigaki H."/>
            <person name="Watanabe T."/>
            <person name="Sugiyama A."/>
            <person name="Takemoto M."/>
            <person name="Kawakami B."/>
            <person name="Yamazaki M."/>
            <person name="Watanabe K."/>
            <person name="Kumagai A."/>
            <person name="Itakura S."/>
            <person name="Fukuzumi Y."/>
            <person name="Fujimori Y."/>
            <person name="Komiyama M."/>
            <person name="Tashiro H."/>
            <person name="Tanigami A."/>
            <person name="Fujiwara T."/>
            <person name="Ono T."/>
            <person name="Yamada K."/>
            <person name="Fujii Y."/>
            <person name="Ozaki K."/>
            <person name="Hirao M."/>
            <person name="Ohmori Y."/>
            <person name="Kawabata A."/>
            <person name="Hikiji T."/>
            <person name="Kobatake N."/>
            <person name="Inagaki H."/>
            <person name="Ikema Y."/>
            <person name="Okamoto S."/>
            <person name="Okitani R."/>
            <person name="Kawakami T."/>
            <person name="Noguchi S."/>
            <person name="Itoh T."/>
            <person name="Shigeta K."/>
            <person name="Senba T."/>
            <person name="Matsumura K."/>
            <person name="Nakajima Y."/>
            <person name="Mizuno T."/>
            <person name="Morinaga M."/>
            <person name="Sasaki M."/>
            <person name="Togashi T."/>
            <person name="Oyama M."/>
            <person name="Hata H."/>
            <person name="Watanabe M."/>
            <person name="Komatsu T."/>
            <person name="Mizushima-Sugano J."/>
            <person name="Satoh T."/>
            <person name="Shirai Y."/>
            <person name="Takahashi Y."/>
            <person name="Nakagawa K."/>
            <person name="Okumura K."/>
            <person name="Nagase T."/>
            <person name="Nomura N."/>
            <person name="Kikuchi H."/>
            <person name="Masuho Y."/>
            <person name="Yamashita R."/>
            <person name="Nakai K."/>
            <person name="Yada T."/>
            <person name="Nakamura Y."/>
            <person name="Ohara O."/>
            <person name="Isogai T."/>
            <person name="Sugano S."/>
        </authorList>
    </citation>
    <scope>NUCLEOTIDE SEQUENCE [LARGE SCALE MRNA] (ISOFORM 2)</scope>
    <scope>NUCLEOTIDE SEQUENCE [LARGE SCALE MRNA] OF 21-195 (ISOFORM 1)</scope>
    <source>
        <tissue>Kidney</tissue>
        <tissue>Uterus</tissue>
    </source>
</reference>
<reference key="2">
    <citation type="journal article" date="2006" name="Genome Res.">
        <title>Diversification of transcriptional modulation: large-scale identification and characterization of putative alternative promoters of human genes.</title>
        <authorList>
            <person name="Kimura K."/>
            <person name="Wakamatsu A."/>
            <person name="Suzuki Y."/>
            <person name="Ota T."/>
            <person name="Nishikawa T."/>
            <person name="Yamashita R."/>
            <person name="Yamamoto J."/>
            <person name="Sekine M."/>
            <person name="Tsuritani K."/>
            <person name="Wakaguri H."/>
            <person name="Ishii S."/>
            <person name="Sugiyama T."/>
            <person name="Saito K."/>
            <person name="Isono Y."/>
            <person name="Irie R."/>
            <person name="Kushida N."/>
            <person name="Yoneyama T."/>
            <person name="Otsuka R."/>
            <person name="Kanda K."/>
            <person name="Yokoi T."/>
            <person name="Kondo H."/>
            <person name="Wagatsuma M."/>
            <person name="Murakawa K."/>
            <person name="Ishida S."/>
            <person name="Ishibashi T."/>
            <person name="Takahashi-Fujii A."/>
            <person name="Tanase T."/>
            <person name="Nagai K."/>
            <person name="Kikuchi H."/>
            <person name="Nakai K."/>
            <person name="Isogai T."/>
            <person name="Sugano S."/>
        </authorList>
    </citation>
    <scope>NUCLEOTIDE SEQUENCE [LARGE SCALE MRNA] (ISOFORM 3)</scope>
    <source>
        <tissue>Brain</tissue>
    </source>
</reference>
<reference key="3">
    <citation type="journal article" date="2006" name="Nature">
        <title>The DNA sequence, annotation and analysis of human chromosome 3.</title>
        <authorList>
            <person name="Muzny D.M."/>
            <person name="Scherer S.E."/>
            <person name="Kaul R."/>
            <person name="Wang J."/>
            <person name="Yu J."/>
            <person name="Sudbrak R."/>
            <person name="Buhay C.J."/>
            <person name="Chen R."/>
            <person name="Cree A."/>
            <person name="Ding Y."/>
            <person name="Dugan-Rocha S."/>
            <person name="Gill R."/>
            <person name="Gunaratne P."/>
            <person name="Harris R.A."/>
            <person name="Hawes A.C."/>
            <person name="Hernandez J."/>
            <person name="Hodgson A.V."/>
            <person name="Hume J."/>
            <person name="Jackson A."/>
            <person name="Khan Z.M."/>
            <person name="Kovar-Smith C."/>
            <person name="Lewis L.R."/>
            <person name="Lozado R.J."/>
            <person name="Metzker M.L."/>
            <person name="Milosavljevic A."/>
            <person name="Miner G.R."/>
            <person name="Morgan M.B."/>
            <person name="Nazareth L.V."/>
            <person name="Scott G."/>
            <person name="Sodergren E."/>
            <person name="Song X.-Z."/>
            <person name="Steffen D."/>
            <person name="Wei S."/>
            <person name="Wheeler D.A."/>
            <person name="Wright M.W."/>
            <person name="Worley K.C."/>
            <person name="Yuan Y."/>
            <person name="Zhang Z."/>
            <person name="Adams C.Q."/>
            <person name="Ansari-Lari M.A."/>
            <person name="Ayele M."/>
            <person name="Brown M.J."/>
            <person name="Chen G."/>
            <person name="Chen Z."/>
            <person name="Clendenning J."/>
            <person name="Clerc-Blankenburg K.P."/>
            <person name="Chen R."/>
            <person name="Chen Z."/>
            <person name="Davis C."/>
            <person name="Delgado O."/>
            <person name="Dinh H.H."/>
            <person name="Dong W."/>
            <person name="Draper H."/>
            <person name="Ernst S."/>
            <person name="Fu G."/>
            <person name="Gonzalez-Garay M.L."/>
            <person name="Garcia D.K."/>
            <person name="Gillett W."/>
            <person name="Gu J."/>
            <person name="Hao B."/>
            <person name="Haugen E."/>
            <person name="Havlak P."/>
            <person name="He X."/>
            <person name="Hennig S."/>
            <person name="Hu S."/>
            <person name="Huang W."/>
            <person name="Jackson L.R."/>
            <person name="Jacob L.S."/>
            <person name="Kelly S.H."/>
            <person name="Kube M."/>
            <person name="Levy R."/>
            <person name="Li Z."/>
            <person name="Liu B."/>
            <person name="Liu J."/>
            <person name="Liu W."/>
            <person name="Lu J."/>
            <person name="Maheshwari M."/>
            <person name="Nguyen B.-V."/>
            <person name="Okwuonu G.O."/>
            <person name="Palmeiri A."/>
            <person name="Pasternak S."/>
            <person name="Perez L.M."/>
            <person name="Phelps K.A."/>
            <person name="Plopper F.J."/>
            <person name="Qiang B."/>
            <person name="Raymond C."/>
            <person name="Rodriguez R."/>
            <person name="Saenphimmachak C."/>
            <person name="Santibanez J."/>
            <person name="Shen H."/>
            <person name="Shen Y."/>
            <person name="Subramanian S."/>
            <person name="Tabor P.E."/>
            <person name="Verduzco D."/>
            <person name="Waldron L."/>
            <person name="Wang J."/>
            <person name="Wang J."/>
            <person name="Wang Q."/>
            <person name="Williams G.A."/>
            <person name="Wong G.K.-S."/>
            <person name="Yao Z."/>
            <person name="Zhang J."/>
            <person name="Zhang X."/>
            <person name="Zhao G."/>
            <person name="Zhou J."/>
            <person name="Zhou Y."/>
            <person name="Nelson D."/>
            <person name="Lehrach H."/>
            <person name="Reinhardt R."/>
            <person name="Naylor S.L."/>
            <person name="Yang H."/>
            <person name="Olson M."/>
            <person name="Weinstock G."/>
            <person name="Gibbs R.A."/>
        </authorList>
    </citation>
    <scope>NUCLEOTIDE SEQUENCE [LARGE SCALE GENOMIC DNA]</scope>
</reference>
<reference key="4">
    <citation type="journal article" date="2004" name="Genome Res.">
        <title>The status, quality, and expansion of the NIH full-length cDNA project: the Mammalian Gene Collection (MGC).</title>
        <authorList>
            <consortium name="The MGC Project Team"/>
        </authorList>
    </citation>
    <scope>NUCLEOTIDE SEQUENCE [LARGE SCALE MRNA] (ISOFORM 1)</scope>
    <source>
        <tissue>Brain</tissue>
        <tissue>Pancreas</tissue>
    </source>
</reference>
<reference key="5">
    <citation type="journal article" date="2004" name="Mol. Cell">
        <title>Xenopus U8 snoRNA binding protein is a conserved nuclear decapping enzyme.</title>
        <authorList>
            <person name="Ghosh T."/>
            <person name="Peterson B."/>
            <person name="Tomasevic N."/>
            <person name="Peculis B.A."/>
        </authorList>
    </citation>
    <scope>FUNCTION AS A DECAPPING ENZYME</scope>
    <scope>CATALYTIC ACTIVITY</scope>
</reference>
<reference key="6">
    <citation type="journal article" date="2007" name="J. Biol. Chem.">
        <title>Metal determines efficiency and substrate specificity of the nuclear NUDIX decapping proteins X29 and H29K (Nudt16).</title>
        <authorList>
            <person name="Peculis B.A."/>
            <person name="Reynolds K."/>
            <person name="Cleland M."/>
        </authorList>
    </citation>
    <scope>FUNCTION AS A DECAPPING ENZYME</scope>
    <scope>SUBUNIT</scope>
    <scope>CATALYTIC ACTIVITY</scope>
    <scope>COFACTOR</scope>
</reference>
<reference key="7">
    <citation type="journal article" date="2008" name="Nucleic Acids Res.">
        <title>Evolutionary conservation supports ancient origin for Nudt16, a nuclear-localized, RNA-binding, RNA-decapping enzyme.</title>
        <authorList>
            <person name="Taylor M.J."/>
            <person name="Peculis B.A."/>
        </authorList>
    </citation>
    <scope>FUNCTION AS A DECAPPING ENZYME</scope>
    <scope>CATALYTIC ACTIVITY</scope>
    <scope>SUBUNIT</scope>
    <scope>RNA-BINDING</scope>
    <scope>GENE EVOLUTION</scope>
    <scope>GENE FAMILY ORGANIZATION</scope>
</reference>
<reference key="8">
    <citation type="journal article" date="2010" name="Mol. Cell">
        <title>Multiple mRNA decapping enzymes in mammalian cells.</title>
        <authorList>
            <person name="Song M.G."/>
            <person name="Li Y."/>
            <person name="Kiledjian M."/>
        </authorList>
    </citation>
    <scope>FUNCTION AS A DECAPPING ENZYME</scope>
    <scope>CATALYTIC ACTIVITY</scope>
    <scope>SUBCELLULAR LOCATION</scope>
</reference>
<reference key="9">
    <citation type="journal article" date="2010" name="Nucleic Acids Res.">
        <title>NUDT16 is a (deoxy)inosine diphosphatase, and its deficiency induces accumulation of single-strand breaks in nuclear DNA and growth arrest.</title>
        <authorList>
            <person name="Iyama T."/>
            <person name="Abolhassani N."/>
            <person name="Tsuchimoto D."/>
            <person name="Nonaka M."/>
            <person name="Nakabeppu Y."/>
        </authorList>
    </citation>
    <scope>FUNCTION AS AN IDP PHOSPHATASE</scope>
    <scope>CATALYTIC ACTIVITY</scope>
    <scope>BIOPHYSICOCHEMICAL PROPERTIES</scope>
    <scope>SUBCELLULAR LOCATION</scope>
    <scope>TISSUE SPECIFICITY</scope>
    <scope>IDENTIFICATION BY MASS SPECTROMETRY</scope>
</reference>
<reference key="10">
    <citation type="journal article" date="2011" name="BMC Syst. Biol.">
        <title>Initial characterization of the human central proteome.</title>
        <authorList>
            <person name="Burkard T.R."/>
            <person name="Planyavsky M."/>
            <person name="Kaupe I."/>
            <person name="Breitwieser F.P."/>
            <person name="Buerckstuemmer T."/>
            <person name="Bennett K.L."/>
            <person name="Superti-Furga G."/>
            <person name="Colinge J."/>
        </authorList>
    </citation>
    <scope>IDENTIFICATION BY MASS SPECTROMETRY [LARGE SCALE ANALYSIS]</scope>
</reference>
<reference key="11">
    <citation type="journal article" date="2011" name="Protein Cell">
        <title>hNUDT16: a universal decapping enzyme for small nucleolar RNA and cytoplasmic mRNA.</title>
        <authorList>
            <person name="Lu G."/>
            <person name="Zhang J."/>
            <person name="Li Y."/>
            <person name="Li Z."/>
            <person name="Zhang N."/>
            <person name="Xu X."/>
            <person name="Wang T."/>
            <person name="Guan Z."/>
            <person name="Gao G.F."/>
            <person name="Yan J."/>
        </authorList>
    </citation>
    <scope>FUNCTION AS A DECAPPING ENZYME</scope>
    <scope>CATALYTIC ACTIVITY</scope>
    <scope>COFACTOR</scope>
    <scope>SUBCELLULAR LOCATION</scope>
</reference>
<reference key="12">
    <citation type="journal article" date="2014" name="J. Proteomics">
        <title>An enzyme assisted RP-RPLC approach for in-depth analysis of human liver phosphoproteome.</title>
        <authorList>
            <person name="Bian Y."/>
            <person name="Song C."/>
            <person name="Cheng K."/>
            <person name="Dong M."/>
            <person name="Wang F."/>
            <person name="Huang J."/>
            <person name="Sun D."/>
            <person name="Wang L."/>
            <person name="Ye M."/>
            <person name="Zou H."/>
        </authorList>
    </citation>
    <scope>IDENTIFICATION BY MASS SPECTROMETRY [LARGE SCALE ANALYSIS]</scope>
    <source>
        <tissue>Liver</tissue>
    </source>
</reference>
<reference key="13">
    <citation type="journal article" date="2008" name="Acta Crystallogr. F">
        <title>Crystallization and crystallographic analysis of human NUDT16.</title>
        <authorList>
            <person name="Zhang J."/>
            <person name="Gao F."/>
            <person name="Zhang Q."/>
            <person name="Chen Q."/>
            <person name="Qi J."/>
            <person name="Yan J."/>
        </authorList>
    </citation>
    <scope>X-RAY CRYSTALLOGRAPHY (2.1 ANGSTROMS)</scope>
</reference>
<reference key="14">
    <citation type="journal article" date="2015" name="PLoS ONE">
        <title>Structural basis for the specificity of human NUDT16 and its regulation by inosine monophosphate.</title>
        <authorList>
            <person name="Tresaugues L."/>
            <person name="Lundbaeck T."/>
            <person name="Welin M."/>
            <person name="Flodin S."/>
            <person name="Nyman T."/>
            <person name="Silvander C."/>
            <person name="Graeslund S."/>
            <person name="Nordlund P."/>
        </authorList>
    </citation>
    <scope>X-RAY CRYSTALLOGRAPHY (1.72 ANGSTROMS) IN COMPLEX WITH IMP AND MAGNESIUM IONS</scope>
    <scope>SUBUNIT</scope>
    <scope>CATALYTIC ACTIVITY</scope>
    <scope>ACTIVITY REGULATION</scope>
    <scope>FUNCTION</scope>
    <scope>COFACTOR</scope>
</reference>
<reference evidence="18 19" key="15">
    <citation type="journal article" date="2020" name="Nucleic Acids Res.">
        <title>Mammalian Nudix proteins cleave nucleotide metabolite caps on RNAs.</title>
        <authorList>
            <person name="Sharma S."/>
            <person name="Grudzien-Nogalska E."/>
            <person name="Hamilton K."/>
            <person name="Jiao X."/>
            <person name="Yang J."/>
            <person name="Tong L."/>
            <person name="Kiledjian M."/>
        </authorList>
    </citation>
    <scope>X-RAY CRYSTALLOGRAPHY (2.3 ANGSTROMS) IN COMPLEX WITH MANGANESE IONS</scope>
    <scope>FUNCTION</scope>
    <scope>CATALYTIC ACTIVITY</scope>
    <scope>SUBUNIT</scope>
    <scope>COFACTOR</scope>
</reference>
<name>NUD16_HUMAN</name>
<accession>Q96DE0</accession>
<accession>B4E3B4</accession>
<accession>E9PED4</accession>
<accession>F5GYJ1</accession>
<accession>Q96N82</accession>
<dbReference type="EC" id="3.6.1.62" evidence="4 5 6 8 9"/>
<dbReference type="EC" id="3.6.1.64" evidence="7 10"/>
<dbReference type="EMBL" id="AK055827">
    <property type="protein sequence ID" value="BAB71024.1"/>
    <property type="status" value="ALT_INIT"/>
    <property type="molecule type" value="mRNA"/>
</dbReference>
<dbReference type="EMBL" id="AK304650">
    <property type="protein sequence ID" value="BAG65426.1"/>
    <property type="molecule type" value="mRNA"/>
</dbReference>
<dbReference type="EMBL" id="BP199028">
    <property type="status" value="NOT_ANNOTATED_CDS"/>
    <property type="molecule type" value="mRNA"/>
</dbReference>
<dbReference type="EMBL" id="AC010210">
    <property type="status" value="NOT_ANNOTATED_CDS"/>
    <property type="molecule type" value="Genomic_DNA"/>
</dbReference>
<dbReference type="EMBL" id="BC009546">
    <property type="protein sequence ID" value="AAH09546.1"/>
    <property type="molecule type" value="mRNA"/>
</dbReference>
<dbReference type="EMBL" id="BC031215">
    <property type="protein sequence ID" value="AAH31215.2"/>
    <property type="molecule type" value="mRNA"/>
</dbReference>
<dbReference type="CCDS" id="CCDS3070.2">
    <molecule id="Q96DE0-1"/>
</dbReference>
<dbReference type="CCDS" id="CCDS54640.1">
    <molecule id="Q96DE0-4"/>
</dbReference>
<dbReference type="CCDS" id="CCDS54641.1">
    <molecule id="Q96DE0-3"/>
</dbReference>
<dbReference type="RefSeq" id="NP_001165376.1">
    <molecule id="Q96DE0-3"/>
    <property type="nucleotide sequence ID" value="NM_001171905.2"/>
</dbReference>
<dbReference type="RefSeq" id="NP_001165377.1">
    <molecule id="Q96DE0-4"/>
    <property type="nucleotide sequence ID" value="NM_001171906.2"/>
</dbReference>
<dbReference type="RefSeq" id="NP_689608.2">
    <molecule id="Q96DE0-1"/>
    <property type="nucleotide sequence ID" value="NM_152395.3"/>
</dbReference>
<dbReference type="PDB" id="2XSQ">
    <property type="method" value="X-ray"/>
    <property type="resolution" value="1.72 A"/>
    <property type="chains" value="A=1-195"/>
</dbReference>
<dbReference type="PDB" id="3COU">
    <property type="method" value="X-ray"/>
    <property type="resolution" value="1.80 A"/>
    <property type="chains" value="A=1-195"/>
</dbReference>
<dbReference type="PDB" id="3MGM">
    <property type="method" value="X-ray"/>
    <property type="resolution" value="1.80 A"/>
    <property type="chains" value="A/B=1-195"/>
</dbReference>
<dbReference type="PDB" id="5VY2">
    <property type="method" value="X-ray"/>
    <property type="resolution" value="2.30 A"/>
    <property type="chains" value="A/B=1-195"/>
</dbReference>
<dbReference type="PDB" id="5W6X">
    <property type="method" value="X-ray"/>
    <property type="resolution" value="2.10 A"/>
    <property type="chains" value="A/B=1-195"/>
</dbReference>
<dbReference type="PDB" id="5W6Z">
    <property type="method" value="X-ray"/>
    <property type="resolution" value="2.61 A"/>
    <property type="chains" value="A/B/D/E=1-195"/>
</dbReference>
<dbReference type="PDB" id="5WJI">
    <property type="method" value="X-ray"/>
    <property type="resolution" value="2.30 A"/>
    <property type="chains" value="A/B=1-195"/>
</dbReference>
<dbReference type="PDB" id="6B09">
    <property type="method" value="X-ray"/>
    <property type="resolution" value="3.20 A"/>
    <property type="chains" value="A/B=1-195"/>
</dbReference>
<dbReference type="PDB" id="6CO2">
    <property type="method" value="X-ray"/>
    <property type="resolution" value="2.49 A"/>
    <property type="chains" value="A/B=1-195"/>
</dbReference>
<dbReference type="PDB" id="6X7U">
    <property type="method" value="X-ray"/>
    <property type="resolution" value="2.70 A"/>
    <property type="chains" value="A/C=1-184"/>
</dbReference>
<dbReference type="PDB" id="6X7V">
    <property type="method" value="X-ray"/>
    <property type="resolution" value="2.30 A"/>
    <property type="chains" value="A/B/C/D=1-195"/>
</dbReference>
<dbReference type="PDBsum" id="2XSQ"/>
<dbReference type="PDBsum" id="3COU"/>
<dbReference type="PDBsum" id="3MGM"/>
<dbReference type="PDBsum" id="5VY2"/>
<dbReference type="PDBsum" id="5W6X"/>
<dbReference type="PDBsum" id="5W6Z"/>
<dbReference type="PDBsum" id="5WJI"/>
<dbReference type="PDBsum" id="6B09"/>
<dbReference type="PDBsum" id="6CO2"/>
<dbReference type="PDBsum" id="6X7U"/>
<dbReference type="PDBsum" id="6X7V"/>
<dbReference type="SMR" id="Q96DE0"/>
<dbReference type="BioGRID" id="126295">
    <property type="interactions" value="26"/>
</dbReference>
<dbReference type="FunCoup" id="Q96DE0">
    <property type="interactions" value="1996"/>
</dbReference>
<dbReference type="IntAct" id="Q96DE0">
    <property type="interactions" value="12"/>
</dbReference>
<dbReference type="MINT" id="Q96DE0"/>
<dbReference type="STRING" id="9606.ENSP00000422375"/>
<dbReference type="iPTMnet" id="Q96DE0"/>
<dbReference type="PhosphoSitePlus" id="Q96DE0"/>
<dbReference type="BioMuta" id="NUDT16"/>
<dbReference type="DMDM" id="68565926"/>
<dbReference type="jPOST" id="Q96DE0"/>
<dbReference type="MassIVE" id="Q96DE0"/>
<dbReference type="PaxDb" id="9606-ENSP00000422375"/>
<dbReference type="PeptideAtlas" id="Q96DE0"/>
<dbReference type="ProteomicsDB" id="19864"/>
<dbReference type="ProteomicsDB" id="24755"/>
<dbReference type="ProteomicsDB" id="76283">
    <molecule id="Q96DE0-1"/>
</dbReference>
<dbReference type="Pumba" id="Q96DE0"/>
<dbReference type="TopDownProteomics" id="Q96DE0-1">
    <molecule id="Q96DE0-1"/>
</dbReference>
<dbReference type="Antibodypedia" id="46680">
    <property type="antibodies" value="42 antibodies from 18 providers"/>
</dbReference>
<dbReference type="DNASU" id="131870"/>
<dbReference type="Ensembl" id="ENST00000502852.1">
    <molecule id="Q96DE0-4"/>
    <property type="protein sequence ID" value="ENSP00000422375.1"/>
    <property type="gene ID" value="ENSG00000198585.12"/>
</dbReference>
<dbReference type="Ensembl" id="ENST00000521288.2">
    <molecule id="Q96DE0-1"/>
    <property type="protein sequence ID" value="ENSP00000429274.2"/>
    <property type="gene ID" value="ENSG00000198585.12"/>
</dbReference>
<dbReference type="Ensembl" id="ENST00000537561.5">
    <molecule id="Q96DE0-3"/>
    <property type="protein sequence ID" value="ENSP00000440230.1"/>
    <property type="gene ID" value="ENSG00000198585.12"/>
</dbReference>
<dbReference type="GeneID" id="131870"/>
<dbReference type="KEGG" id="hsa:131870"/>
<dbReference type="MANE-Select" id="ENST00000521288.2">
    <property type="protein sequence ID" value="ENSP00000429274.2"/>
    <property type="RefSeq nucleotide sequence ID" value="NM_152395.3"/>
    <property type="RefSeq protein sequence ID" value="NP_689608.2"/>
</dbReference>
<dbReference type="UCSC" id="uc003eog.3">
    <molecule id="Q96DE0-1"/>
    <property type="organism name" value="human"/>
</dbReference>
<dbReference type="AGR" id="HGNC:26442"/>
<dbReference type="CTD" id="131870"/>
<dbReference type="DisGeNET" id="131870"/>
<dbReference type="GeneCards" id="NUDT16"/>
<dbReference type="HGNC" id="HGNC:26442">
    <property type="gene designation" value="NUDT16"/>
</dbReference>
<dbReference type="HPA" id="ENSG00000198585">
    <property type="expression patterns" value="Low tissue specificity"/>
</dbReference>
<dbReference type="MIM" id="617381">
    <property type="type" value="gene"/>
</dbReference>
<dbReference type="neXtProt" id="NX_Q96DE0"/>
<dbReference type="OpenTargets" id="ENSG00000198585"/>
<dbReference type="PharmGKB" id="PA134955224"/>
<dbReference type="VEuPathDB" id="HostDB:ENSG00000198585"/>
<dbReference type="eggNOG" id="ENOG502S20E">
    <property type="taxonomic scope" value="Eukaryota"/>
</dbReference>
<dbReference type="GeneTree" id="ENSGT00390000016224"/>
<dbReference type="HOGENOM" id="CLU_110418_1_0_1"/>
<dbReference type="InParanoid" id="Q96DE0"/>
<dbReference type="OMA" id="VVLMQMR"/>
<dbReference type="OrthoDB" id="5950381at2759"/>
<dbReference type="PAN-GO" id="Q96DE0">
    <property type="GO annotations" value="7 GO annotations based on evolutionary models"/>
</dbReference>
<dbReference type="PhylomeDB" id="Q96DE0"/>
<dbReference type="BioCyc" id="MetaCyc:MONOMER-17869"/>
<dbReference type="BRENDA" id="3.6.1.62">
    <property type="organism ID" value="2681"/>
</dbReference>
<dbReference type="BRENDA" id="3.6.1.64">
    <property type="organism ID" value="2681"/>
</dbReference>
<dbReference type="PathwayCommons" id="Q96DE0"/>
<dbReference type="Reactome" id="R-HSA-2393930">
    <property type="pathway name" value="Phosphate bond hydrolysis by NUDT proteins"/>
</dbReference>
<dbReference type="SignaLink" id="Q96DE0"/>
<dbReference type="BioGRID-ORCS" id="131870">
    <property type="hits" value="8 hits in 1161 CRISPR screens"/>
</dbReference>
<dbReference type="ChiTaRS" id="NUDT16">
    <property type="organism name" value="human"/>
</dbReference>
<dbReference type="EvolutionaryTrace" id="Q96DE0"/>
<dbReference type="GenomeRNAi" id="131870"/>
<dbReference type="Pharos" id="Q96DE0">
    <property type="development level" value="Tbio"/>
</dbReference>
<dbReference type="PRO" id="PR:Q96DE0"/>
<dbReference type="Proteomes" id="UP000005640">
    <property type="component" value="Chromosome 3"/>
</dbReference>
<dbReference type="RNAct" id="Q96DE0">
    <property type="molecule type" value="protein"/>
</dbReference>
<dbReference type="Bgee" id="ENSG00000198585">
    <property type="expression patterns" value="Expressed in tendon of biceps brachii and 181 other cell types or tissues"/>
</dbReference>
<dbReference type="GO" id="GO:0005737">
    <property type="term" value="C:cytoplasm"/>
    <property type="evidence" value="ECO:0000314"/>
    <property type="project" value="UniProtKB"/>
</dbReference>
<dbReference type="GO" id="GO:0005730">
    <property type="term" value="C:nucleolus"/>
    <property type="evidence" value="ECO:0000314"/>
    <property type="project" value="HPA"/>
</dbReference>
<dbReference type="GO" id="GO:0005654">
    <property type="term" value="C:nucleoplasm"/>
    <property type="evidence" value="ECO:0000314"/>
    <property type="project" value="HPA"/>
</dbReference>
<dbReference type="GO" id="GO:0005634">
    <property type="term" value="C:nucleus"/>
    <property type="evidence" value="ECO:0000314"/>
    <property type="project" value="UniProtKB"/>
</dbReference>
<dbReference type="GO" id="GO:0140933">
    <property type="term" value="F:5'-(N(7)-methylguanosine 5'-triphospho)-[mRNA] hydrolase activity"/>
    <property type="evidence" value="ECO:0000314"/>
    <property type="project" value="UniProtKB"/>
</dbReference>
<dbReference type="GO" id="GO:0031404">
    <property type="term" value="F:chloride ion binding"/>
    <property type="evidence" value="ECO:0000314"/>
    <property type="project" value="UniProtKB"/>
</dbReference>
<dbReference type="GO" id="GO:0050897">
    <property type="term" value="F:cobalt ion binding"/>
    <property type="evidence" value="ECO:0000314"/>
    <property type="project" value="UniProtKB"/>
</dbReference>
<dbReference type="GO" id="GO:0097383">
    <property type="term" value="F:dIDP phosphatase activity"/>
    <property type="evidence" value="ECO:0007669"/>
    <property type="project" value="RHEA"/>
</dbReference>
<dbReference type="GO" id="GO:0035870">
    <property type="term" value="F:dITP diphosphatase activity"/>
    <property type="evidence" value="ECO:0000250"/>
    <property type="project" value="UniProtKB"/>
</dbReference>
<dbReference type="GO" id="GO:0042802">
    <property type="term" value="F:identical protein binding"/>
    <property type="evidence" value="ECO:0000353"/>
    <property type="project" value="IntAct"/>
</dbReference>
<dbReference type="GO" id="GO:1990003">
    <property type="term" value="F:IDP phosphatase activity"/>
    <property type="evidence" value="ECO:0000314"/>
    <property type="project" value="UniProtKB"/>
</dbReference>
<dbReference type="GO" id="GO:0000287">
    <property type="term" value="F:magnesium ion binding"/>
    <property type="evidence" value="ECO:0000314"/>
    <property type="project" value="UniProtKB"/>
</dbReference>
<dbReference type="GO" id="GO:0030145">
    <property type="term" value="F:manganese ion binding"/>
    <property type="evidence" value="ECO:0000314"/>
    <property type="project" value="UniProtKB"/>
</dbReference>
<dbReference type="GO" id="GO:0008235">
    <property type="term" value="F:metalloexopeptidase activity"/>
    <property type="evidence" value="ECO:0000314"/>
    <property type="project" value="UniProtKB"/>
</dbReference>
<dbReference type="GO" id="GO:0003729">
    <property type="term" value="F:mRNA binding"/>
    <property type="evidence" value="ECO:0000314"/>
    <property type="project" value="UniProtKB"/>
</dbReference>
<dbReference type="GO" id="GO:0000166">
    <property type="term" value="F:nucleotide binding"/>
    <property type="evidence" value="ECO:0007669"/>
    <property type="project" value="UniProtKB-KW"/>
</dbReference>
<dbReference type="GO" id="GO:1990174">
    <property type="term" value="F:phosphodiesterase decapping endonuclease activity"/>
    <property type="evidence" value="ECO:0000314"/>
    <property type="project" value="UniProtKB"/>
</dbReference>
<dbReference type="GO" id="GO:0042803">
    <property type="term" value="F:protein homodimerization activity"/>
    <property type="evidence" value="ECO:0000314"/>
    <property type="project" value="UniProtKB"/>
</dbReference>
<dbReference type="GO" id="GO:0110153">
    <property type="term" value="F:RNA NAD-cap (NMN-forming) hydrolase activity"/>
    <property type="evidence" value="ECO:0007669"/>
    <property type="project" value="RHEA"/>
</dbReference>
<dbReference type="GO" id="GO:0030515">
    <property type="term" value="F:snoRNA binding"/>
    <property type="evidence" value="ECO:0000314"/>
    <property type="project" value="UniProtKB"/>
</dbReference>
<dbReference type="GO" id="GO:0035863">
    <property type="term" value="P:dITP catabolic process"/>
    <property type="evidence" value="ECO:0000250"/>
    <property type="project" value="UniProtKB"/>
</dbReference>
<dbReference type="GO" id="GO:0006402">
    <property type="term" value="P:mRNA catabolic process"/>
    <property type="evidence" value="ECO:0000314"/>
    <property type="project" value="UniProtKB"/>
</dbReference>
<dbReference type="GO" id="GO:0110155">
    <property type="term" value="P:NAD-cap decapping"/>
    <property type="evidence" value="ECO:0000314"/>
    <property type="project" value="UniProtKB"/>
</dbReference>
<dbReference type="GO" id="GO:2000233">
    <property type="term" value="P:negative regulation of rRNA processing"/>
    <property type="evidence" value="ECO:0000250"/>
    <property type="project" value="UniProtKB"/>
</dbReference>
<dbReference type="GO" id="GO:0090068">
    <property type="term" value="P:positive regulation of cell cycle process"/>
    <property type="evidence" value="ECO:0000315"/>
    <property type="project" value="UniProtKB"/>
</dbReference>
<dbReference type="GO" id="GO:0016077">
    <property type="term" value="P:sno(s)RNA catabolic process"/>
    <property type="evidence" value="ECO:0000314"/>
    <property type="project" value="UniProtKB"/>
</dbReference>
<dbReference type="CDD" id="cd18869">
    <property type="entry name" value="NUDIX_U8_SnoRNA_DE_Nudt16"/>
    <property type="match status" value="1"/>
</dbReference>
<dbReference type="FunFam" id="3.90.79.10:FF:000055">
    <property type="entry name" value="U8 snoRNA-decapping enzyme"/>
    <property type="match status" value="1"/>
</dbReference>
<dbReference type="Gene3D" id="3.90.79.10">
    <property type="entry name" value="Nucleoside Triphosphate Pyrophosphohydrolase"/>
    <property type="match status" value="1"/>
</dbReference>
<dbReference type="InterPro" id="IPR015797">
    <property type="entry name" value="NUDIX_hydrolase-like_dom_sf"/>
</dbReference>
<dbReference type="InterPro" id="IPR000086">
    <property type="entry name" value="NUDIX_hydrolase_dom"/>
</dbReference>
<dbReference type="InterPro" id="IPR054754">
    <property type="entry name" value="NudT16"/>
</dbReference>
<dbReference type="PANTHER" id="PTHR31699">
    <property type="entry name" value="NUDIX T16 FAMILY MEMBER"/>
    <property type="match status" value="1"/>
</dbReference>
<dbReference type="PANTHER" id="PTHR31699:SF5">
    <property type="entry name" value="U8 SNORNA-DECAPPING ENZYME"/>
    <property type="match status" value="1"/>
</dbReference>
<dbReference type="Pfam" id="PF22327">
    <property type="entry name" value="Nudt16-like"/>
    <property type="match status" value="1"/>
</dbReference>
<dbReference type="SUPFAM" id="SSF55811">
    <property type="entry name" value="Nudix"/>
    <property type="match status" value="1"/>
</dbReference>
<dbReference type="PROSITE" id="PS51462">
    <property type="entry name" value="NUDIX"/>
    <property type="match status" value="1"/>
</dbReference>
<gene>
    <name type="primary">NUDT16</name>
</gene>
<feature type="chain" id="PRO_0000057117" description="U8 snoRNA-decapping enzyme">
    <location>
        <begin position="1"/>
        <end position="195"/>
    </location>
</feature>
<feature type="domain" description="Nudix hydrolase" evidence="3">
    <location>
        <begin position="18"/>
        <end position="173"/>
    </location>
</feature>
<feature type="short sequence motif" description="Nudix box">
    <location>
        <begin position="61"/>
        <end position="82"/>
    </location>
</feature>
<feature type="binding site" evidence="16">
    <location>
        <position position="24"/>
    </location>
    <ligand>
        <name>substrate</name>
    </ligand>
</feature>
<feature type="binding site" evidence="16">
    <location>
        <position position="50"/>
    </location>
    <ligand>
        <name>substrate</name>
    </ligand>
</feature>
<feature type="binding site" evidence="16">
    <location>
        <position position="57"/>
    </location>
    <ligand>
        <name>substrate</name>
    </ligand>
</feature>
<feature type="binding site" evidence="11 16 18">
    <location>
        <position position="59"/>
    </location>
    <ligand>
        <name>Mn(2+)</name>
        <dbReference type="ChEBI" id="CHEBI:29035"/>
        <label>1</label>
    </ligand>
</feature>
<feature type="binding site" evidence="16">
    <location>
        <position position="76"/>
    </location>
    <ligand>
        <name>Mn(2+)</name>
        <dbReference type="ChEBI" id="CHEBI:29035"/>
        <label>2</label>
    </ligand>
</feature>
<feature type="binding site" evidence="2">
    <location>
        <position position="76"/>
    </location>
    <ligand>
        <name>Mn(2+)</name>
        <dbReference type="ChEBI" id="CHEBI:29035"/>
        <label>3</label>
    </ligand>
</feature>
<feature type="binding site" evidence="11 16 18">
    <location>
        <position position="80"/>
    </location>
    <ligand>
        <name>Mn(2+)</name>
        <dbReference type="ChEBI" id="CHEBI:29035"/>
        <label>1</label>
    </ligand>
</feature>
<feature type="binding site" evidence="2">
    <location>
        <position position="80"/>
    </location>
    <ligand>
        <name>Mn(2+)</name>
        <dbReference type="ChEBI" id="CHEBI:29035"/>
        <label>3</label>
    </ligand>
</feature>
<feature type="binding site" evidence="11 18 19">
    <location>
        <position position="99"/>
    </location>
    <ligand>
        <name>Mn(2+)</name>
        <dbReference type="ChEBI" id="CHEBI:29035"/>
        <label>4</label>
    </ligand>
</feature>
<feature type="binding site" evidence="16">
    <location>
        <position position="170"/>
    </location>
    <ligand>
        <name>substrate</name>
    </ligand>
</feature>
<feature type="binding site" evidence="11 18 19">
    <location>
        <position position="173"/>
    </location>
    <ligand>
        <name>Mn(2+)</name>
        <dbReference type="ChEBI" id="CHEBI:29035"/>
        <label>4</label>
    </ligand>
</feature>
<feature type="splice variant" id="VSP_045449" description="In isoform 3." evidence="13">
    <location>
        <begin position="1"/>
        <end position="46"/>
    </location>
</feature>
<feature type="splice variant" id="VSP_045450" description="In isoform 2." evidence="12">
    <location>
        <begin position="1"/>
        <end position="33"/>
    </location>
</feature>
<feature type="splice variant" id="VSP_045451" description="In isoform 2 and isoform 4." evidence="12">
    <original>LGLVRVPLYTLRDGVGGLPTFLENSFIGSAREQLLEALQDLGLLQSGSISGLKIPAHH</original>
    <variation>GPAWDSVPFPISSSPKAFSPPRKHPWRKVFAPLTLPSPQLSWWSWDRDHLYSELVLPTWAFCKGLSHPLPGEILSRTHSSMSLCCSLLTV</variation>
    <location>
        <begin position="138"/>
        <end position="195"/>
    </location>
</feature>
<feature type="splice variant" id="VSP_045452" description="In isoform 3." evidence="13">
    <original>ALQDLGLLQSGSISGLKIPAHH</original>
    <variation>AALHGPMKTEMRTLVLGREGRTWECFLIGSER</variation>
    <location>
        <begin position="174"/>
        <end position="195"/>
    </location>
</feature>
<feature type="sequence conflict" description="In Ref. 4; AAH31215." evidence="15" ref="4">
    <original>A</original>
    <variation>V</variation>
    <location>
        <position position="22"/>
    </location>
</feature>
<feature type="strand" evidence="20">
    <location>
        <begin position="5"/>
        <end position="7"/>
    </location>
</feature>
<feature type="helix" evidence="20">
    <location>
        <begin position="9"/>
        <end position="13"/>
    </location>
</feature>
<feature type="strand" evidence="20">
    <location>
        <begin position="20"/>
        <end position="35"/>
    </location>
</feature>
<feature type="turn" evidence="20">
    <location>
        <begin position="36"/>
        <end position="38"/>
    </location>
</feature>
<feature type="strand" evidence="20">
    <location>
        <begin position="39"/>
        <end position="50"/>
    </location>
</feature>
<feature type="strand" evidence="20">
    <location>
        <begin position="58"/>
        <end position="61"/>
    </location>
</feature>
<feature type="turn" evidence="21">
    <location>
        <begin position="64"/>
        <end position="66"/>
    </location>
</feature>
<feature type="helix" evidence="20">
    <location>
        <begin position="69"/>
        <end position="81"/>
    </location>
</feature>
<feature type="helix" evidence="20">
    <location>
        <begin position="83"/>
        <end position="87"/>
    </location>
</feature>
<feature type="helix" evidence="20">
    <location>
        <begin position="92"/>
        <end position="94"/>
    </location>
</feature>
<feature type="strand" evidence="20">
    <location>
        <begin position="95"/>
        <end position="100"/>
    </location>
</feature>
<feature type="strand" evidence="20">
    <location>
        <begin position="102"/>
        <end position="114"/>
    </location>
</feature>
<feature type="helix" evidence="20">
    <location>
        <begin position="117"/>
        <end position="126"/>
    </location>
</feature>
<feature type="helix" evidence="20">
    <location>
        <begin position="127"/>
        <end position="129"/>
    </location>
</feature>
<feature type="turn" evidence="20">
    <location>
        <begin position="134"/>
        <end position="136"/>
    </location>
</feature>
<feature type="strand" evidence="20">
    <location>
        <begin position="137"/>
        <end position="142"/>
    </location>
</feature>
<feature type="strand" evidence="22">
    <location>
        <begin position="149"/>
        <end position="152"/>
    </location>
</feature>
<feature type="helix" evidence="20">
    <location>
        <begin position="155"/>
        <end position="158"/>
    </location>
</feature>
<feature type="helix" evidence="20">
    <location>
        <begin position="167"/>
        <end position="177"/>
    </location>
</feature>
<feature type="turn" evidence="20">
    <location>
        <begin position="178"/>
        <end position="181"/>
    </location>
</feature>
<feature type="sequence conflict" description="In Ref. 2; BP199028." evidence="15" ref="2">
    <location sequence="Q96DE0-3">
        <position position="128"/>
    </location>
</feature>
<keyword id="KW-0002">3D-structure</keyword>
<keyword id="KW-0025">Alternative splicing</keyword>
<keyword id="KW-0963">Cytoplasm</keyword>
<keyword id="KW-0378">Hydrolase</keyword>
<keyword id="KW-0460">Magnesium</keyword>
<keyword id="KW-0464">Manganese</keyword>
<keyword id="KW-0479">Metal-binding</keyword>
<keyword id="KW-0546">Nucleotide metabolism</keyword>
<keyword id="KW-0547">Nucleotide-binding</keyword>
<keyword id="KW-0539">Nucleus</keyword>
<keyword id="KW-1267">Proteomics identification</keyword>
<keyword id="KW-1185">Reference proteome</keyword>
<keyword id="KW-0694">RNA-binding</keyword>
<sequence length="195" mass="21273">MAGARRLELGEALALGSGWRHACHALLYAPDPGMLFGRIPLRYAILMQMRFDGRLGFPGGFVDTQDRSLEDGLNRELREELGEAAAAFRVERTDYRSSHVGSGPRVVAHFYAKRLTLEELLAVEAGATRAKDHGLEVLGLVRVPLYTLRDGVGGLPTFLENSFIGSAREQLLEALQDLGLLQSGSISGLKIPAHH</sequence>